<proteinExistence type="inferred from homology"/>
<sequence length="228" mass="26332">MNYNPFQWTFKSEQTANEFNEHVEKSVPFYKEIHKIVKIIGGFFVEENTNVYDIGSSTGNLLKGMSNILKRNANYIGIDNSIYMNQVAMNDADSDNIKIISEDVQDFKFTNASYITSILTLQFINIEDREKTIKNVYQGLNKGGAFILVEKVNGEFVQSHEIMNQIYHDFKLENGLTYEEVIKKSQSIRGVLKPLTLKQNKRMLEKAGFKDIDTWFKWNNFVGIIAVK</sequence>
<dbReference type="EC" id="2.1.3.-" evidence="1"/>
<dbReference type="EMBL" id="CP000029">
    <property type="protein sequence ID" value="AAW54884.1"/>
    <property type="molecule type" value="Genomic_DNA"/>
</dbReference>
<dbReference type="RefSeq" id="WP_002504519.1">
    <property type="nucleotide sequence ID" value="NC_002976.3"/>
</dbReference>
<dbReference type="SMR" id="Q5HMV4"/>
<dbReference type="STRING" id="176279.SERP1524"/>
<dbReference type="KEGG" id="ser:SERP1524"/>
<dbReference type="eggNOG" id="COG2226">
    <property type="taxonomic scope" value="Bacteria"/>
</dbReference>
<dbReference type="HOGENOM" id="CLU_078475_1_0_9"/>
<dbReference type="Proteomes" id="UP000000531">
    <property type="component" value="Chromosome"/>
</dbReference>
<dbReference type="GO" id="GO:0016743">
    <property type="term" value="F:carboxyl- or carbamoyltransferase activity"/>
    <property type="evidence" value="ECO:0007669"/>
    <property type="project" value="UniProtKB-UniRule"/>
</dbReference>
<dbReference type="GO" id="GO:1904047">
    <property type="term" value="F:S-adenosyl-L-methionine binding"/>
    <property type="evidence" value="ECO:0007669"/>
    <property type="project" value="UniProtKB-UniRule"/>
</dbReference>
<dbReference type="GO" id="GO:0002098">
    <property type="term" value="P:tRNA wobble uridine modification"/>
    <property type="evidence" value="ECO:0007669"/>
    <property type="project" value="InterPro"/>
</dbReference>
<dbReference type="CDD" id="cd02440">
    <property type="entry name" value="AdoMet_MTases"/>
    <property type="match status" value="1"/>
</dbReference>
<dbReference type="Gene3D" id="3.40.50.150">
    <property type="entry name" value="Vaccinia Virus protein VP39"/>
    <property type="match status" value="1"/>
</dbReference>
<dbReference type="HAMAP" id="MF_01589">
    <property type="entry name" value="Cx_SAM_synthase"/>
    <property type="match status" value="1"/>
</dbReference>
<dbReference type="InterPro" id="IPR005271">
    <property type="entry name" value="CmoA"/>
</dbReference>
<dbReference type="InterPro" id="IPR041698">
    <property type="entry name" value="Methyltransf_25"/>
</dbReference>
<dbReference type="InterPro" id="IPR029063">
    <property type="entry name" value="SAM-dependent_MTases_sf"/>
</dbReference>
<dbReference type="PANTHER" id="PTHR43861:SF2">
    <property type="entry name" value="CARBOXY-S-ADENOSYL-L-METHIONINE SYNTHASE"/>
    <property type="match status" value="1"/>
</dbReference>
<dbReference type="PANTHER" id="PTHR43861">
    <property type="entry name" value="TRANS-ACONITATE 2-METHYLTRANSFERASE-RELATED"/>
    <property type="match status" value="1"/>
</dbReference>
<dbReference type="Pfam" id="PF13649">
    <property type="entry name" value="Methyltransf_25"/>
    <property type="match status" value="1"/>
</dbReference>
<dbReference type="PIRSF" id="PIRSF006325">
    <property type="entry name" value="MeTrfase_bac"/>
    <property type="match status" value="1"/>
</dbReference>
<dbReference type="SUPFAM" id="SSF53335">
    <property type="entry name" value="S-adenosyl-L-methionine-dependent methyltransferases"/>
    <property type="match status" value="1"/>
</dbReference>
<name>CMOA_STAEQ</name>
<keyword id="KW-1185">Reference proteome</keyword>
<keyword id="KW-0949">S-adenosyl-L-methionine</keyword>
<keyword id="KW-0808">Transferase</keyword>
<feature type="chain" id="PRO_0000314393" description="Carboxy-S-adenosyl-L-methionine synthase">
    <location>
        <begin position="1"/>
        <end position="228"/>
    </location>
</feature>
<feature type="binding site" evidence="1">
    <location>
        <position position="30"/>
    </location>
    <ligand>
        <name>S-adenosyl-L-methionine</name>
        <dbReference type="ChEBI" id="CHEBI:59789"/>
    </ligand>
</feature>
<feature type="binding site" evidence="1">
    <location>
        <begin position="55"/>
        <end position="57"/>
    </location>
    <ligand>
        <name>S-adenosyl-L-methionine</name>
        <dbReference type="ChEBI" id="CHEBI:59789"/>
    </ligand>
</feature>
<feature type="binding site" evidence="1">
    <location>
        <begin position="79"/>
        <end position="80"/>
    </location>
    <ligand>
        <name>S-adenosyl-L-methionine</name>
        <dbReference type="ChEBI" id="CHEBI:59789"/>
    </ligand>
</feature>
<feature type="binding site" evidence="1">
    <location>
        <begin position="103"/>
        <end position="104"/>
    </location>
    <ligand>
        <name>S-adenosyl-L-methionine</name>
        <dbReference type="ChEBI" id="CHEBI:59789"/>
    </ligand>
</feature>
<evidence type="ECO:0000255" key="1">
    <source>
        <dbReference type="HAMAP-Rule" id="MF_01589"/>
    </source>
</evidence>
<reference key="1">
    <citation type="journal article" date="2005" name="J. Bacteriol.">
        <title>Insights on evolution of virulence and resistance from the complete genome analysis of an early methicillin-resistant Staphylococcus aureus strain and a biofilm-producing methicillin-resistant Staphylococcus epidermidis strain.</title>
        <authorList>
            <person name="Gill S.R."/>
            <person name="Fouts D.E."/>
            <person name="Archer G.L."/>
            <person name="Mongodin E.F."/>
            <person name="DeBoy R.T."/>
            <person name="Ravel J."/>
            <person name="Paulsen I.T."/>
            <person name="Kolonay J.F."/>
            <person name="Brinkac L.M."/>
            <person name="Beanan M.J."/>
            <person name="Dodson R.J."/>
            <person name="Daugherty S.C."/>
            <person name="Madupu R."/>
            <person name="Angiuoli S.V."/>
            <person name="Durkin A.S."/>
            <person name="Haft D.H."/>
            <person name="Vamathevan J.J."/>
            <person name="Khouri H."/>
            <person name="Utterback T.R."/>
            <person name="Lee C."/>
            <person name="Dimitrov G."/>
            <person name="Jiang L."/>
            <person name="Qin H."/>
            <person name="Weidman J."/>
            <person name="Tran K."/>
            <person name="Kang K.H."/>
            <person name="Hance I.R."/>
            <person name="Nelson K.E."/>
            <person name="Fraser C.M."/>
        </authorList>
    </citation>
    <scope>NUCLEOTIDE SEQUENCE [LARGE SCALE GENOMIC DNA]</scope>
    <source>
        <strain>ATCC 35984 / DSM 28319 / BCRC 17069 / CCUG 31568 / BM 3577 / RP62A</strain>
    </source>
</reference>
<gene>
    <name evidence="1" type="primary">cmoA</name>
    <name type="ordered locus">SERP1524</name>
</gene>
<comment type="function">
    <text evidence="1">Catalyzes the conversion of S-adenosyl-L-methionine (SAM) to carboxy-S-adenosyl-L-methionine (Cx-SAM).</text>
</comment>
<comment type="catalytic activity">
    <reaction evidence="1">
        <text>prephenate + S-adenosyl-L-methionine = carboxy-S-adenosyl-L-methionine + 3-phenylpyruvate + H2O</text>
        <dbReference type="Rhea" id="RHEA:51692"/>
        <dbReference type="ChEBI" id="CHEBI:15377"/>
        <dbReference type="ChEBI" id="CHEBI:18005"/>
        <dbReference type="ChEBI" id="CHEBI:29934"/>
        <dbReference type="ChEBI" id="CHEBI:59789"/>
        <dbReference type="ChEBI" id="CHEBI:134278"/>
    </reaction>
</comment>
<comment type="similarity">
    <text evidence="1">Belongs to the class I-like SAM-binding methyltransferase superfamily. Cx-SAM synthase family.</text>
</comment>
<protein>
    <recommendedName>
        <fullName evidence="1">Carboxy-S-adenosyl-L-methionine synthase</fullName>
        <shortName evidence="1">Cx-SAM synthase</shortName>
        <ecNumber evidence="1">2.1.3.-</ecNumber>
    </recommendedName>
</protein>
<accession>Q5HMV4</accession>
<organism>
    <name type="scientific">Staphylococcus epidermidis (strain ATCC 35984 / DSM 28319 / BCRC 17069 / CCUG 31568 / BM 3577 / RP62A)</name>
    <dbReference type="NCBI Taxonomy" id="176279"/>
    <lineage>
        <taxon>Bacteria</taxon>
        <taxon>Bacillati</taxon>
        <taxon>Bacillota</taxon>
        <taxon>Bacilli</taxon>
        <taxon>Bacillales</taxon>
        <taxon>Staphylococcaceae</taxon>
        <taxon>Staphylococcus</taxon>
    </lineage>
</organism>